<dbReference type="EC" id="2.3.1.275" evidence="1"/>
<dbReference type="EMBL" id="CP000240">
    <property type="protein sequence ID" value="ABD01319.1"/>
    <property type="molecule type" value="Genomic_DNA"/>
</dbReference>
<dbReference type="SMR" id="Q2JPG8"/>
<dbReference type="STRING" id="321332.CYB_0321"/>
<dbReference type="KEGG" id="cyb:CYB_0321"/>
<dbReference type="eggNOG" id="COG0344">
    <property type="taxonomic scope" value="Bacteria"/>
</dbReference>
<dbReference type="HOGENOM" id="CLU_081254_7_1_3"/>
<dbReference type="UniPathway" id="UPA00085"/>
<dbReference type="Proteomes" id="UP000001938">
    <property type="component" value="Chromosome"/>
</dbReference>
<dbReference type="GO" id="GO:0005886">
    <property type="term" value="C:plasma membrane"/>
    <property type="evidence" value="ECO:0007669"/>
    <property type="project" value="UniProtKB-SubCell"/>
</dbReference>
<dbReference type="GO" id="GO:0043772">
    <property type="term" value="F:acyl-phosphate glycerol-3-phosphate acyltransferase activity"/>
    <property type="evidence" value="ECO:0007669"/>
    <property type="project" value="UniProtKB-UniRule"/>
</dbReference>
<dbReference type="GO" id="GO:0008654">
    <property type="term" value="P:phospholipid biosynthetic process"/>
    <property type="evidence" value="ECO:0007669"/>
    <property type="project" value="UniProtKB-UniRule"/>
</dbReference>
<dbReference type="HAMAP" id="MF_01043">
    <property type="entry name" value="PlsY"/>
    <property type="match status" value="1"/>
</dbReference>
<dbReference type="InterPro" id="IPR003811">
    <property type="entry name" value="G3P_acylTferase_PlsY"/>
</dbReference>
<dbReference type="NCBIfam" id="TIGR00023">
    <property type="entry name" value="glycerol-3-phosphate 1-O-acyltransferase PlsY"/>
    <property type="match status" value="1"/>
</dbReference>
<dbReference type="PANTHER" id="PTHR30309:SF0">
    <property type="entry name" value="GLYCEROL-3-PHOSPHATE ACYLTRANSFERASE-RELATED"/>
    <property type="match status" value="1"/>
</dbReference>
<dbReference type="PANTHER" id="PTHR30309">
    <property type="entry name" value="INNER MEMBRANE PROTEIN YGIH"/>
    <property type="match status" value="1"/>
</dbReference>
<dbReference type="Pfam" id="PF02660">
    <property type="entry name" value="G3P_acyltransf"/>
    <property type="match status" value="1"/>
</dbReference>
<dbReference type="SMART" id="SM01207">
    <property type="entry name" value="G3P_acyltransf"/>
    <property type="match status" value="1"/>
</dbReference>
<name>PLSY_SYNJB</name>
<organism>
    <name type="scientific">Synechococcus sp. (strain JA-2-3B'a(2-13))</name>
    <name type="common">Cyanobacteria bacterium Yellowstone B-Prime</name>
    <dbReference type="NCBI Taxonomy" id="321332"/>
    <lineage>
        <taxon>Bacteria</taxon>
        <taxon>Bacillati</taxon>
        <taxon>Cyanobacteriota</taxon>
        <taxon>Cyanophyceae</taxon>
        <taxon>Synechococcales</taxon>
        <taxon>Synechococcaceae</taxon>
        <taxon>Synechococcus</taxon>
    </lineage>
</organism>
<protein>
    <recommendedName>
        <fullName evidence="1">Glycerol-3-phosphate acyltransferase</fullName>
    </recommendedName>
    <alternativeName>
        <fullName evidence="1">Acyl-PO4 G3P acyltransferase</fullName>
    </alternativeName>
    <alternativeName>
        <fullName evidence="1">Acyl-phosphate--glycerol-3-phosphate acyltransferase</fullName>
    </alternativeName>
    <alternativeName>
        <fullName evidence="1">G3P acyltransferase</fullName>
        <shortName evidence="1">GPAT</shortName>
        <ecNumber evidence="1">2.3.1.275</ecNumber>
    </alternativeName>
    <alternativeName>
        <fullName evidence="1">Lysophosphatidic acid synthase</fullName>
        <shortName evidence="1">LPA synthase</shortName>
    </alternativeName>
</protein>
<sequence length="200" mass="20790">MLTALLAVLGGYLLGSIPTGYWVGRWWGGIDIRQQGSGSTGATNVLRTLGKGPALLVLLVDAAKGAAAVALGSALGSAWWVVLAALFAVIGHSRSCWLGFRGGKSVATSLGILLAMAWPVALTTFGVWLLGLALTRIVSFSSLLAAVAAPVVMWATAQPLPYLLFALAGGVYVIGAHRRNIERLLAGSEPRIGQKWTQSP</sequence>
<gene>
    <name evidence="1" type="primary">plsY</name>
    <name type="ordered locus">CYB_0321</name>
</gene>
<feature type="chain" id="PRO_0000250341" description="Glycerol-3-phosphate acyltransferase">
    <location>
        <begin position="1"/>
        <end position="200"/>
    </location>
</feature>
<feature type="transmembrane region" description="Helical" evidence="1">
    <location>
        <begin position="4"/>
        <end position="24"/>
    </location>
</feature>
<feature type="transmembrane region" description="Helical" evidence="1">
    <location>
        <begin position="70"/>
        <end position="90"/>
    </location>
</feature>
<feature type="transmembrane region" description="Helical" evidence="1">
    <location>
        <begin position="110"/>
        <end position="130"/>
    </location>
</feature>
<feature type="transmembrane region" description="Helical" evidence="1">
    <location>
        <begin position="158"/>
        <end position="178"/>
    </location>
</feature>
<reference key="1">
    <citation type="journal article" date="2007" name="ISME J.">
        <title>Population level functional diversity in a microbial community revealed by comparative genomic and metagenomic analyses.</title>
        <authorList>
            <person name="Bhaya D."/>
            <person name="Grossman A.R."/>
            <person name="Steunou A.-S."/>
            <person name="Khuri N."/>
            <person name="Cohan F.M."/>
            <person name="Hamamura N."/>
            <person name="Melendrez M.C."/>
            <person name="Bateson M.M."/>
            <person name="Ward D.M."/>
            <person name="Heidelberg J.F."/>
        </authorList>
    </citation>
    <scope>NUCLEOTIDE SEQUENCE [LARGE SCALE GENOMIC DNA]</scope>
    <source>
        <strain>JA-2-3B'a(2-13)</strain>
    </source>
</reference>
<evidence type="ECO:0000255" key="1">
    <source>
        <dbReference type="HAMAP-Rule" id="MF_01043"/>
    </source>
</evidence>
<keyword id="KW-0997">Cell inner membrane</keyword>
<keyword id="KW-1003">Cell membrane</keyword>
<keyword id="KW-0444">Lipid biosynthesis</keyword>
<keyword id="KW-0443">Lipid metabolism</keyword>
<keyword id="KW-0472">Membrane</keyword>
<keyword id="KW-0594">Phospholipid biosynthesis</keyword>
<keyword id="KW-1208">Phospholipid metabolism</keyword>
<keyword id="KW-1185">Reference proteome</keyword>
<keyword id="KW-0808">Transferase</keyword>
<keyword id="KW-0812">Transmembrane</keyword>
<keyword id="KW-1133">Transmembrane helix</keyword>
<proteinExistence type="inferred from homology"/>
<comment type="function">
    <text evidence="1">Catalyzes the transfer of an acyl group from acyl-phosphate (acyl-PO(4)) to glycerol-3-phosphate (G3P) to form lysophosphatidic acid (LPA). This enzyme utilizes acyl-phosphate as fatty acyl donor, but not acyl-CoA or acyl-ACP.</text>
</comment>
<comment type="catalytic activity">
    <reaction evidence="1">
        <text>an acyl phosphate + sn-glycerol 3-phosphate = a 1-acyl-sn-glycero-3-phosphate + phosphate</text>
        <dbReference type="Rhea" id="RHEA:34075"/>
        <dbReference type="ChEBI" id="CHEBI:43474"/>
        <dbReference type="ChEBI" id="CHEBI:57597"/>
        <dbReference type="ChEBI" id="CHEBI:57970"/>
        <dbReference type="ChEBI" id="CHEBI:59918"/>
        <dbReference type="EC" id="2.3.1.275"/>
    </reaction>
</comment>
<comment type="pathway">
    <text evidence="1">Lipid metabolism; phospholipid metabolism.</text>
</comment>
<comment type="subunit">
    <text evidence="1">Probably interacts with PlsX.</text>
</comment>
<comment type="subcellular location">
    <subcellularLocation>
        <location evidence="1">Cell inner membrane</location>
        <topology evidence="1">Multi-pass membrane protein</topology>
    </subcellularLocation>
</comment>
<comment type="similarity">
    <text evidence="1">Belongs to the PlsY family.</text>
</comment>
<accession>Q2JPG8</accession>